<protein>
    <recommendedName>
        <fullName>Complexin-1</fullName>
    </recommendedName>
    <alternativeName>
        <fullName>Complexin I</fullName>
        <shortName>CPX I</shortName>
    </alternativeName>
    <alternativeName>
        <fullName>Synaphin-2</fullName>
    </alternativeName>
</protein>
<reference key="1">
    <citation type="journal article" date="1995" name="Cell">
        <title>Complexins: cytosolic proteins that regulate SNAP receptor function.</title>
        <authorList>
            <person name="McMahon H.T."/>
            <person name="Missler M."/>
            <person name="Li C."/>
            <person name="Suedhof T.C."/>
        </authorList>
    </citation>
    <scope>NUCLEOTIDE SEQUENCE [MRNA]</scope>
    <source>
        <tissue>Brain</tissue>
    </source>
</reference>
<reference key="2">
    <citation type="journal article" date="2014" name="Nat. Commun.">
        <title>Protein interaction network of alternatively spliced isoforms from brain links genetic risk factors for autism.</title>
        <authorList>
            <person name="Corominas R."/>
            <person name="Yang X."/>
            <person name="Lin G.N."/>
            <person name="Kang S."/>
            <person name="Shen Y."/>
            <person name="Ghamsari L."/>
            <person name="Broly M."/>
            <person name="Rodriguez M."/>
            <person name="Tam S."/>
            <person name="Wanamaker S.A."/>
            <person name="Fan C."/>
            <person name="Yi S."/>
            <person name="Tasan M."/>
            <person name="Lemmens I."/>
            <person name="Kuang X."/>
            <person name="Zhao N."/>
            <person name="Malhotra D."/>
            <person name="Michaelson J.J."/>
            <person name="Vacic V."/>
            <person name="Calderwood M.A."/>
            <person name="Roth F.P."/>
            <person name="Tavernier J."/>
            <person name="Horvath S."/>
            <person name="Salehi-Ashtiani K."/>
            <person name="Korkin D."/>
            <person name="Sebat J."/>
            <person name="Hill D.E."/>
            <person name="Hao T."/>
            <person name="Vidal M."/>
            <person name="Iakoucheva L.M."/>
        </authorList>
    </citation>
    <scope>NUCLEOTIDE SEQUENCE [MRNA]</scope>
    <source>
        <tissue>Fetal brain</tissue>
    </source>
</reference>
<reference key="3">
    <citation type="submission" date="2004-10" db="EMBL/GenBank/DDBJ databases">
        <title>Cloning of human full-length CDSs in BD Creator(TM) system donor vector.</title>
        <authorList>
            <person name="Kalnine N."/>
            <person name="Chen X."/>
            <person name="Rolfs A."/>
            <person name="Halleck A."/>
            <person name="Hines L."/>
            <person name="Eisenstein S."/>
            <person name="Koundinya M."/>
            <person name="Raphael J."/>
            <person name="Moreira D."/>
            <person name="Kelley T."/>
            <person name="LaBaer J."/>
            <person name="Lin Y."/>
            <person name="Phelan M."/>
            <person name="Farmer A."/>
        </authorList>
    </citation>
    <scope>NUCLEOTIDE SEQUENCE [LARGE SCALE MRNA]</scope>
</reference>
<reference key="4">
    <citation type="journal article" date="2011" name="Invest. Ophthalmol. Vis. Sci.">
        <title>Full-length transcriptome analysis of human retina-derived cell lines ARPE-19 and Y79 using the vector-capping method.</title>
        <authorList>
            <person name="Oshikawa M."/>
            <person name="Tsutsui C."/>
            <person name="Ikegami T."/>
            <person name="Fuchida Y."/>
            <person name="Matsubara M."/>
            <person name="Toyama S."/>
            <person name="Usami R."/>
            <person name="Ohtoko K."/>
            <person name="Kato S."/>
        </authorList>
    </citation>
    <scope>NUCLEOTIDE SEQUENCE [LARGE SCALE MRNA]</scope>
</reference>
<reference key="5">
    <citation type="journal article" date="2004" name="Nat. Genet.">
        <title>Complete sequencing and characterization of 21,243 full-length human cDNAs.</title>
        <authorList>
            <person name="Ota T."/>
            <person name="Suzuki Y."/>
            <person name="Nishikawa T."/>
            <person name="Otsuki T."/>
            <person name="Sugiyama T."/>
            <person name="Irie R."/>
            <person name="Wakamatsu A."/>
            <person name="Hayashi K."/>
            <person name="Sato H."/>
            <person name="Nagai K."/>
            <person name="Kimura K."/>
            <person name="Makita H."/>
            <person name="Sekine M."/>
            <person name="Obayashi M."/>
            <person name="Nishi T."/>
            <person name="Shibahara T."/>
            <person name="Tanaka T."/>
            <person name="Ishii S."/>
            <person name="Yamamoto J."/>
            <person name="Saito K."/>
            <person name="Kawai Y."/>
            <person name="Isono Y."/>
            <person name="Nakamura Y."/>
            <person name="Nagahari K."/>
            <person name="Murakami K."/>
            <person name="Yasuda T."/>
            <person name="Iwayanagi T."/>
            <person name="Wagatsuma M."/>
            <person name="Shiratori A."/>
            <person name="Sudo H."/>
            <person name="Hosoiri T."/>
            <person name="Kaku Y."/>
            <person name="Kodaira H."/>
            <person name="Kondo H."/>
            <person name="Sugawara M."/>
            <person name="Takahashi M."/>
            <person name="Kanda K."/>
            <person name="Yokoi T."/>
            <person name="Furuya T."/>
            <person name="Kikkawa E."/>
            <person name="Omura Y."/>
            <person name="Abe K."/>
            <person name="Kamihara K."/>
            <person name="Katsuta N."/>
            <person name="Sato K."/>
            <person name="Tanikawa M."/>
            <person name="Yamazaki M."/>
            <person name="Ninomiya K."/>
            <person name="Ishibashi T."/>
            <person name="Yamashita H."/>
            <person name="Murakawa K."/>
            <person name="Fujimori K."/>
            <person name="Tanai H."/>
            <person name="Kimata M."/>
            <person name="Watanabe M."/>
            <person name="Hiraoka S."/>
            <person name="Chiba Y."/>
            <person name="Ishida S."/>
            <person name="Ono Y."/>
            <person name="Takiguchi S."/>
            <person name="Watanabe S."/>
            <person name="Yosida M."/>
            <person name="Hotuta T."/>
            <person name="Kusano J."/>
            <person name="Kanehori K."/>
            <person name="Takahashi-Fujii A."/>
            <person name="Hara H."/>
            <person name="Tanase T.-O."/>
            <person name="Nomura Y."/>
            <person name="Togiya S."/>
            <person name="Komai F."/>
            <person name="Hara R."/>
            <person name="Takeuchi K."/>
            <person name="Arita M."/>
            <person name="Imose N."/>
            <person name="Musashino K."/>
            <person name="Yuuki H."/>
            <person name="Oshima A."/>
            <person name="Sasaki N."/>
            <person name="Aotsuka S."/>
            <person name="Yoshikawa Y."/>
            <person name="Matsunawa H."/>
            <person name="Ichihara T."/>
            <person name="Shiohata N."/>
            <person name="Sano S."/>
            <person name="Moriya S."/>
            <person name="Momiyama H."/>
            <person name="Satoh N."/>
            <person name="Takami S."/>
            <person name="Terashima Y."/>
            <person name="Suzuki O."/>
            <person name="Nakagawa S."/>
            <person name="Senoh A."/>
            <person name="Mizoguchi H."/>
            <person name="Goto Y."/>
            <person name="Shimizu F."/>
            <person name="Wakebe H."/>
            <person name="Hishigaki H."/>
            <person name="Watanabe T."/>
            <person name="Sugiyama A."/>
            <person name="Takemoto M."/>
            <person name="Kawakami B."/>
            <person name="Yamazaki M."/>
            <person name="Watanabe K."/>
            <person name="Kumagai A."/>
            <person name="Itakura S."/>
            <person name="Fukuzumi Y."/>
            <person name="Fujimori Y."/>
            <person name="Komiyama M."/>
            <person name="Tashiro H."/>
            <person name="Tanigami A."/>
            <person name="Fujiwara T."/>
            <person name="Ono T."/>
            <person name="Yamada K."/>
            <person name="Fujii Y."/>
            <person name="Ozaki K."/>
            <person name="Hirao M."/>
            <person name="Ohmori Y."/>
            <person name="Kawabata A."/>
            <person name="Hikiji T."/>
            <person name="Kobatake N."/>
            <person name="Inagaki H."/>
            <person name="Ikema Y."/>
            <person name="Okamoto S."/>
            <person name="Okitani R."/>
            <person name="Kawakami T."/>
            <person name="Noguchi S."/>
            <person name="Itoh T."/>
            <person name="Shigeta K."/>
            <person name="Senba T."/>
            <person name="Matsumura K."/>
            <person name="Nakajima Y."/>
            <person name="Mizuno T."/>
            <person name="Morinaga M."/>
            <person name="Sasaki M."/>
            <person name="Togashi T."/>
            <person name="Oyama M."/>
            <person name="Hata H."/>
            <person name="Watanabe M."/>
            <person name="Komatsu T."/>
            <person name="Mizushima-Sugano J."/>
            <person name="Satoh T."/>
            <person name="Shirai Y."/>
            <person name="Takahashi Y."/>
            <person name="Nakagawa K."/>
            <person name="Okumura K."/>
            <person name="Nagase T."/>
            <person name="Nomura N."/>
            <person name="Kikuchi H."/>
            <person name="Masuho Y."/>
            <person name="Yamashita R."/>
            <person name="Nakai K."/>
            <person name="Yada T."/>
            <person name="Nakamura Y."/>
            <person name="Ohara O."/>
            <person name="Isogai T."/>
            <person name="Sugano S."/>
        </authorList>
    </citation>
    <scope>NUCLEOTIDE SEQUENCE [LARGE SCALE MRNA]</scope>
    <source>
        <tissue>Cerebellum</tissue>
    </source>
</reference>
<reference key="6">
    <citation type="journal article" date="2005" name="Nature">
        <title>Generation and annotation of the DNA sequences of human chromosomes 2 and 4.</title>
        <authorList>
            <person name="Hillier L.W."/>
            <person name="Graves T.A."/>
            <person name="Fulton R.S."/>
            <person name="Fulton L.A."/>
            <person name="Pepin K.H."/>
            <person name="Minx P."/>
            <person name="Wagner-McPherson C."/>
            <person name="Layman D."/>
            <person name="Wylie K."/>
            <person name="Sekhon M."/>
            <person name="Becker M.C."/>
            <person name="Fewell G.A."/>
            <person name="Delehaunty K.D."/>
            <person name="Miner T.L."/>
            <person name="Nash W.E."/>
            <person name="Kremitzki C."/>
            <person name="Oddy L."/>
            <person name="Du H."/>
            <person name="Sun H."/>
            <person name="Bradshaw-Cordum H."/>
            <person name="Ali J."/>
            <person name="Carter J."/>
            <person name="Cordes M."/>
            <person name="Harris A."/>
            <person name="Isak A."/>
            <person name="van Brunt A."/>
            <person name="Nguyen C."/>
            <person name="Du F."/>
            <person name="Courtney L."/>
            <person name="Kalicki J."/>
            <person name="Ozersky P."/>
            <person name="Abbott S."/>
            <person name="Armstrong J."/>
            <person name="Belter E.A."/>
            <person name="Caruso L."/>
            <person name="Cedroni M."/>
            <person name="Cotton M."/>
            <person name="Davidson T."/>
            <person name="Desai A."/>
            <person name="Elliott G."/>
            <person name="Erb T."/>
            <person name="Fronick C."/>
            <person name="Gaige T."/>
            <person name="Haakenson W."/>
            <person name="Haglund K."/>
            <person name="Holmes A."/>
            <person name="Harkins R."/>
            <person name="Kim K."/>
            <person name="Kruchowski S.S."/>
            <person name="Strong C.M."/>
            <person name="Grewal N."/>
            <person name="Goyea E."/>
            <person name="Hou S."/>
            <person name="Levy A."/>
            <person name="Martinka S."/>
            <person name="Mead K."/>
            <person name="McLellan M.D."/>
            <person name="Meyer R."/>
            <person name="Randall-Maher J."/>
            <person name="Tomlinson C."/>
            <person name="Dauphin-Kohlberg S."/>
            <person name="Kozlowicz-Reilly A."/>
            <person name="Shah N."/>
            <person name="Swearengen-Shahid S."/>
            <person name="Snider J."/>
            <person name="Strong J.T."/>
            <person name="Thompson J."/>
            <person name="Yoakum M."/>
            <person name="Leonard S."/>
            <person name="Pearman C."/>
            <person name="Trani L."/>
            <person name="Radionenko M."/>
            <person name="Waligorski J.E."/>
            <person name="Wang C."/>
            <person name="Rock S.M."/>
            <person name="Tin-Wollam A.-M."/>
            <person name="Maupin R."/>
            <person name="Latreille P."/>
            <person name="Wendl M.C."/>
            <person name="Yang S.-P."/>
            <person name="Pohl C."/>
            <person name="Wallis J.W."/>
            <person name="Spieth J."/>
            <person name="Bieri T.A."/>
            <person name="Berkowicz N."/>
            <person name="Nelson J.O."/>
            <person name="Osborne J."/>
            <person name="Ding L."/>
            <person name="Meyer R."/>
            <person name="Sabo A."/>
            <person name="Shotland Y."/>
            <person name="Sinha P."/>
            <person name="Wohldmann P.E."/>
            <person name="Cook L.L."/>
            <person name="Hickenbotham M.T."/>
            <person name="Eldred J."/>
            <person name="Williams D."/>
            <person name="Jones T.A."/>
            <person name="She X."/>
            <person name="Ciccarelli F.D."/>
            <person name="Izaurralde E."/>
            <person name="Taylor J."/>
            <person name="Schmutz J."/>
            <person name="Myers R.M."/>
            <person name="Cox D.R."/>
            <person name="Huang X."/>
            <person name="McPherson J.D."/>
            <person name="Mardis E.R."/>
            <person name="Clifton S.W."/>
            <person name="Warren W.C."/>
            <person name="Chinwalla A.T."/>
            <person name="Eddy S.R."/>
            <person name="Marra M.A."/>
            <person name="Ovcharenko I."/>
            <person name="Furey T.S."/>
            <person name="Miller W."/>
            <person name="Eichler E.E."/>
            <person name="Bork P."/>
            <person name="Suyama M."/>
            <person name="Torrents D."/>
            <person name="Waterston R.H."/>
            <person name="Wilson R.K."/>
        </authorList>
    </citation>
    <scope>NUCLEOTIDE SEQUENCE [LARGE SCALE GENOMIC DNA]</scope>
</reference>
<reference key="7">
    <citation type="submission" date="2005-09" db="EMBL/GenBank/DDBJ databases">
        <authorList>
            <person name="Mural R.J."/>
            <person name="Istrail S."/>
            <person name="Sutton G.G."/>
            <person name="Florea L."/>
            <person name="Halpern A.L."/>
            <person name="Mobarry C.M."/>
            <person name="Lippert R."/>
            <person name="Walenz B."/>
            <person name="Shatkay H."/>
            <person name="Dew I."/>
            <person name="Miller J.R."/>
            <person name="Flanigan M.J."/>
            <person name="Edwards N.J."/>
            <person name="Bolanos R."/>
            <person name="Fasulo D."/>
            <person name="Halldorsson B.V."/>
            <person name="Hannenhalli S."/>
            <person name="Turner R."/>
            <person name="Yooseph S."/>
            <person name="Lu F."/>
            <person name="Nusskern D.R."/>
            <person name="Shue B.C."/>
            <person name="Zheng X.H."/>
            <person name="Zhong F."/>
            <person name="Delcher A.L."/>
            <person name="Huson D.H."/>
            <person name="Kravitz S.A."/>
            <person name="Mouchard L."/>
            <person name="Reinert K."/>
            <person name="Remington K.A."/>
            <person name="Clark A.G."/>
            <person name="Waterman M.S."/>
            <person name="Eichler E.E."/>
            <person name="Adams M.D."/>
            <person name="Hunkapiller M.W."/>
            <person name="Myers E.W."/>
            <person name="Venter J.C."/>
        </authorList>
    </citation>
    <scope>NUCLEOTIDE SEQUENCE [LARGE SCALE GENOMIC DNA]</scope>
</reference>
<reference key="8">
    <citation type="journal article" date="2004" name="Genome Res.">
        <title>The status, quality, and expansion of the NIH full-length cDNA project: the Mammalian Gene Collection (MGC).</title>
        <authorList>
            <consortium name="The MGC Project Team"/>
        </authorList>
    </citation>
    <scope>NUCLEOTIDE SEQUENCE [LARGE SCALE MRNA]</scope>
    <source>
        <tissue>Eye</tissue>
    </source>
</reference>
<reference key="9">
    <citation type="journal article" date="1998" name="Lancet">
        <title>Preferential involvement of excitatory neurons in medial temporal lobe in schizophrenia.</title>
        <authorList>
            <person name="Harrison P.J."/>
            <person name="Eastwood S.L."/>
        </authorList>
    </citation>
    <scope>TISSUE SPECIFICITY</scope>
</reference>
<reference key="10">
    <citation type="journal article" date="2001" name="Neuroscience">
        <title>Cerebellar synaptic protein expression in schizophrenia.</title>
        <authorList>
            <person name="Eastwood S.L."/>
            <person name="Cotter D."/>
            <person name="Harrison P.J."/>
        </authorList>
    </citation>
    <scope>TISSUE SPECIFICITY</scope>
</reference>
<reference key="11">
    <citation type="journal article" date="2004" name="Proteomics">
        <title>Proteome analysis of human substantia nigra in Parkinson's disease.</title>
        <authorList>
            <person name="Basso M."/>
            <person name="Giraudo S."/>
            <person name="Corpillo D."/>
            <person name="Bergamasco B."/>
            <person name="Lopiano L."/>
            <person name="Fasano M."/>
        </authorList>
    </citation>
    <scope>IDENTIFICATION BY MASS SPECTROMETRY</scope>
    <scope>TISSUE SPECIFICITY</scope>
</reference>
<reference key="12">
    <citation type="journal article" date="2015" name="Neuron">
        <title>Genes that affect brain structure and function identified by rare variant analyses of mendelian neurologic disease.</title>
        <authorList>
            <person name="Karaca E."/>
            <person name="Harel T."/>
            <person name="Pehlivan D."/>
            <person name="Jhangiani S.N."/>
            <person name="Gambin T."/>
            <person name="Coban Akdemir Z."/>
            <person name="Gonzaga-Jauregui C."/>
            <person name="Erdin S."/>
            <person name="Bayram Y."/>
            <person name="Campbell I.M."/>
            <person name="Hunter J.V."/>
            <person name="Atik M.M."/>
            <person name="Van Esch H."/>
            <person name="Yuan B."/>
            <person name="Wiszniewski W."/>
            <person name="Isikay S."/>
            <person name="Yesil G."/>
            <person name="Yuregir O.O."/>
            <person name="Tug Bozdogan S."/>
            <person name="Aslan H."/>
            <person name="Aydin H."/>
            <person name="Tos T."/>
            <person name="Aksoy A."/>
            <person name="De Vivo D.C."/>
            <person name="Jain P."/>
            <person name="Geckinli B.B."/>
            <person name="Sezer O."/>
            <person name="Gul D."/>
            <person name="Durmaz B."/>
            <person name="Cogulu O."/>
            <person name="Ozkinay F."/>
            <person name="Topcu V."/>
            <person name="Candan S."/>
            <person name="Cebi A.H."/>
            <person name="Ikbal M."/>
            <person name="Yilmaz Gulec E."/>
            <person name="Gezdirici A."/>
            <person name="Koparir E."/>
            <person name="Ekici F."/>
            <person name="Coskun S."/>
            <person name="Cicek S."/>
            <person name="Karaer K."/>
            <person name="Koparir A."/>
            <person name="Duz M.B."/>
            <person name="Kirat E."/>
            <person name="Fenercioglu E."/>
            <person name="Ulucan H."/>
            <person name="Seven M."/>
            <person name="Guran T."/>
            <person name="Elcioglu N."/>
            <person name="Yildirim M.S."/>
            <person name="Aktas D."/>
            <person name="Alikasifoglu M."/>
            <person name="Ture M."/>
            <person name="Yakut T."/>
            <person name="Overton J.D."/>
            <person name="Yuksel A."/>
            <person name="Ozen M."/>
            <person name="Muzny D.M."/>
            <person name="Adams D.R."/>
            <person name="Boerwinkle E."/>
            <person name="Chung W.K."/>
            <person name="Gibbs R.A."/>
            <person name="Lupski J.R."/>
        </authorList>
    </citation>
    <scope>INVOLVEMENT IN DEE63</scope>
    <scope>VARIANT DEE63 108-GLU--LYS-134 DEL</scope>
</reference>
<reference key="13">
    <citation type="journal article" date="2017" name="Eur. J. Hum. Genet.">
        <title>Variants in CPLX1 in two families with autosomal-recessive severe infantile myoclonic epilepsy and ID.</title>
        <authorList>
            <person name="Redler S."/>
            <person name="Strom T.M."/>
            <person name="Wieland T."/>
            <person name="Cremer K."/>
            <person name="Engels H."/>
            <person name="Distelmaier F."/>
            <person name="Schaper J."/>
            <person name="Kuechler A."/>
            <person name="Lemke J.R."/>
            <person name="Jeschke S."/>
            <person name="Schreyer N."/>
            <person name="Sticht H."/>
            <person name="Koch M."/>
            <person name="Luedecke H.J."/>
            <person name="Wieczorek D."/>
        </authorList>
    </citation>
    <scope>INVOLVEMENT IN DEE63</scope>
    <scope>VARIANTS DEE63 105-CYS--LYS-134 DEL AND MET-128</scope>
</reference>
<reference key="14">
    <citation type="journal article" date="2011" name="Nat. Struct. Mol. Biol.">
        <title>Complexin cross-links prefusion SNAREs into a zigzag array.</title>
        <authorList>
            <person name="Kummel D."/>
            <person name="Krishnakumar S.S."/>
            <person name="Radoff D.T."/>
            <person name="Li F."/>
            <person name="Giraudo C.G."/>
            <person name="Pincet F."/>
            <person name="Rothman J.E."/>
            <person name="Reinisch K.M."/>
        </authorList>
    </citation>
    <scope>X-RAY CRYSTALLOGRAPHY (3.5 ANGSTROMS) OF 28-83 ALONE AND IN COMPLEX WITH SNAP25; VAMP2 AND RAT STX1A</scope>
    <scope>SUBUNIT</scope>
    <scope>FUNCTION</scope>
</reference>
<accession>O14810</accession>
<accession>A6NI80</accession>
<accession>B2R4R5</accession>
<accession>D3DVN3</accession>
<accession>F1T0G1</accession>
<feature type="chain" id="PRO_0000144870" description="Complexin-1">
    <location>
        <begin position="1"/>
        <end position="134"/>
    </location>
</feature>
<feature type="region of interest" description="Disordered" evidence="4">
    <location>
        <begin position="1"/>
        <end position="60"/>
    </location>
</feature>
<feature type="region of interest" description="Interaction with the SNARE complex" evidence="1">
    <location>
        <begin position="48"/>
        <end position="70"/>
    </location>
</feature>
<feature type="region of interest" description="Disordered" evidence="4">
    <location>
        <begin position="74"/>
        <end position="113"/>
    </location>
</feature>
<feature type="coiled-coil region" evidence="3">
    <location>
        <begin position="29"/>
        <end position="69"/>
    </location>
</feature>
<feature type="compositionally biased region" description="Basic and acidic residues" evidence="4">
    <location>
        <begin position="15"/>
        <end position="60"/>
    </location>
</feature>
<feature type="sequence variant" id="VAR_080795" description="In DEE63." evidence="9">
    <location>
        <begin position="105"/>
        <end position="134"/>
    </location>
</feature>
<feature type="sequence variant" id="VAR_080796" description="In DEE63." evidence="8">
    <location>
        <begin position="108"/>
        <end position="134"/>
    </location>
</feature>
<feature type="sequence variant" id="VAR_080797" description="In DEE63; uncertain significance; dbSNP:rs371709824." evidence="9">
    <original>L</original>
    <variation>M</variation>
    <location>
        <position position="128"/>
    </location>
</feature>
<feature type="helix" evidence="12">
    <location>
        <begin position="29"/>
        <end position="70"/>
    </location>
</feature>
<evidence type="ECO:0000250" key="1"/>
<evidence type="ECO:0000250" key="2">
    <source>
        <dbReference type="UniProtKB" id="P63040"/>
    </source>
</evidence>
<evidence type="ECO:0000255" key="3"/>
<evidence type="ECO:0000256" key="4">
    <source>
        <dbReference type="SAM" id="MobiDB-lite"/>
    </source>
</evidence>
<evidence type="ECO:0000269" key="5">
    <source>
    </source>
</evidence>
<evidence type="ECO:0000269" key="6">
    <source>
    </source>
</evidence>
<evidence type="ECO:0000269" key="7">
    <source>
    </source>
</evidence>
<evidence type="ECO:0000269" key="8">
    <source>
    </source>
</evidence>
<evidence type="ECO:0000269" key="9">
    <source>
    </source>
</evidence>
<evidence type="ECO:0000269" key="10">
    <source>
    </source>
</evidence>
<evidence type="ECO:0000305" key="11"/>
<evidence type="ECO:0007829" key="12">
    <source>
        <dbReference type="PDB" id="3RK3"/>
    </source>
</evidence>
<dbReference type="EMBL" id="AF022383">
    <property type="protein sequence ID" value="AAB72108.1"/>
    <property type="molecule type" value="mRNA"/>
</dbReference>
<dbReference type="EMBL" id="KJ534815">
    <property type="protein sequence ID" value="AHW56455.1"/>
    <property type="molecule type" value="mRNA"/>
</dbReference>
<dbReference type="EMBL" id="BT007029">
    <property type="protein sequence ID" value="AAP35676.1"/>
    <property type="molecule type" value="mRNA"/>
</dbReference>
<dbReference type="EMBL" id="AB593095">
    <property type="protein sequence ID" value="BAJ84035.1"/>
    <property type="molecule type" value="mRNA"/>
</dbReference>
<dbReference type="EMBL" id="AK311921">
    <property type="protein sequence ID" value="BAG34862.1"/>
    <property type="molecule type" value="mRNA"/>
</dbReference>
<dbReference type="EMBL" id="AC139887">
    <property type="status" value="NOT_ANNOTATED_CDS"/>
    <property type="molecule type" value="Genomic_DNA"/>
</dbReference>
<dbReference type="EMBL" id="CH471131">
    <property type="protein sequence ID" value="EAW82648.1"/>
    <property type="molecule type" value="Genomic_DNA"/>
</dbReference>
<dbReference type="EMBL" id="CH471131">
    <property type="protein sequence ID" value="EAW82649.1"/>
    <property type="molecule type" value="Genomic_DNA"/>
</dbReference>
<dbReference type="EMBL" id="BC002471">
    <property type="protein sequence ID" value="AAH02471.1"/>
    <property type="molecule type" value="mRNA"/>
</dbReference>
<dbReference type="CCDS" id="CCDS46995.1"/>
<dbReference type="RefSeq" id="NP_006642.1">
    <property type="nucleotide sequence ID" value="NM_006651.4"/>
</dbReference>
<dbReference type="PDB" id="3RK3">
    <property type="method" value="X-ray"/>
    <property type="resolution" value="3.50 A"/>
    <property type="chains" value="E=26-83"/>
</dbReference>
<dbReference type="PDB" id="3RL0">
    <property type="method" value="X-ray"/>
    <property type="resolution" value="3.80 A"/>
    <property type="chains" value="g/h/i/j/k/l/m/n=26-83"/>
</dbReference>
<dbReference type="PDBsum" id="3RK3"/>
<dbReference type="PDBsum" id="3RL0"/>
<dbReference type="SMR" id="O14810"/>
<dbReference type="BioGRID" id="116028">
    <property type="interactions" value="42"/>
</dbReference>
<dbReference type="CORUM" id="O14810"/>
<dbReference type="DIP" id="DIP-56109N"/>
<dbReference type="FunCoup" id="O14810">
    <property type="interactions" value="335"/>
</dbReference>
<dbReference type="IntAct" id="O14810">
    <property type="interactions" value="13"/>
</dbReference>
<dbReference type="MINT" id="O14810"/>
<dbReference type="STRING" id="9606.ENSP00000305613"/>
<dbReference type="iPTMnet" id="O14810"/>
<dbReference type="PhosphoSitePlus" id="O14810"/>
<dbReference type="BioMuta" id="CPLX1"/>
<dbReference type="jPOST" id="O14810"/>
<dbReference type="MassIVE" id="O14810"/>
<dbReference type="PaxDb" id="9606-ENSP00000305613"/>
<dbReference type="PeptideAtlas" id="O14810"/>
<dbReference type="ProteomicsDB" id="48251"/>
<dbReference type="Antibodypedia" id="22160">
    <property type="antibodies" value="170 antibodies from 25 providers"/>
</dbReference>
<dbReference type="DNASU" id="10815"/>
<dbReference type="Ensembl" id="ENST00000304062.11">
    <property type="protein sequence ID" value="ENSP00000305613.6"/>
    <property type="gene ID" value="ENSG00000168993.15"/>
</dbReference>
<dbReference type="GeneID" id="10815"/>
<dbReference type="KEGG" id="hsa:10815"/>
<dbReference type="MANE-Select" id="ENST00000304062.11">
    <property type="protein sequence ID" value="ENSP00000305613.6"/>
    <property type="RefSeq nucleotide sequence ID" value="NM_006651.4"/>
    <property type="RefSeq protein sequence ID" value="NP_006642.1"/>
</dbReference>
<dbReference type="UCSC" id="uc003gbi.4">
    <property type="organism name" value="human"/>
</dbReference>
<dbReference type="AGR" id="HGNC:2309"/>
<dbReference type="CTD" id="10815"/>
<dbReference type="DisGeNET" id="10815"/>
<dbReference type="GeneCards" id="CPLX1"/>
<dbReference type="HGNC" id="HGNC:2309">
    <property type="gene designation" value="CPLX1"/>
</dbReference>
<dbReference type="HPA" id="ENSG00000168993">
    <property type="expression patterns" value="Tissue enriched (brain)"/>
</dbReference>
<dbReference type="MalaCards" id="CPLX1"/>
<dbReference type="MIM" id="605032">
    <property type="type" value="gene"/>
</dbReference>
<dbReference type="MIM" id="617976">
    <property type="type" value="phenotype"/>
</dbReference>
<dbReference type="neXtProt" id="NX_O14810"/>
<dbReference type="OpenTargets" id="ENSG00000168993"/>
<dbReference type="Orphanet" id="352582">
    <property type="disease" value="Familial infantile myoclonic epilepsy"/>
</dbReference>
<dbReference type="Orphanet" id="280">
    <property type="disease" value="Wolf-Hirschhorn syndrome"/>
</dbReference>
<dbReference type="PharmGKB" id="PA26826"/>
<dbReference type="VEuPathDB" id="HostDB:ENSG00000168993"/>
<dbReference type="eggNOG" id="ENOG502S3I2">
    <property type="taxonomic scope" value="Eukaryota"/>
</dbReference>
<dbReference type="GeneTree" id="ENSGT00950000182938"/>
<dbReference type="InParanoid" id="O14810"/>
<dbReference type="OMA" id="RVHESHA"/>
<dbReference type="OrthoDB" id="5972090at2759"/>
<dbReference type="PAN-GO" id="O14810">
    <property type="GO annotations" value="5 GO annotations based on evolutionary models"/>
</dbReference>
<dbReference type="PhylomeDB" id="O14810"/>
<dbReference type="TreeFam" id="TF315172"/>
<dbReference type="PathwayCommons" id="O14810"/>
<dbReference type="Reactome" id="R-HSA-181429">
    <property type="pathway name" value="Serotonin Neurotransmitter Release Cycle"/>
</dbReference>
<dbReference type="Reactome" id="R-HSA-181430">
    <property type="pathway name" value="Norepinephrine Neurotransmitter Release Cycle"/>
</dbReference>
<dbReference type="Reactome" id="R-HSA-210500">
    <property type="pathway name" value="Glutamate Neurotransmitter Release Cycle"/>
</dbReference>
<dbReference type="Reactome" id="R-HSA-212676">
    <property type="pathway name" value="Dopamine Neurotransmitter Release Cycle"/>
</dbReference>
<dbReference type="Reactome" id="R-HSA-264642">
    <property type="pathway name" value="Acetylcholine Neurotransmitter Release Cycle"/>
</dbReference>
<dbReference type="Reactome" id="R-HSA-888590">
    <property type="pathway name" value="GABA synthesis, release, reuptake and degradation"/>
</dbReference>
<dbReference type="SignaLink" id="O14810"/>
<dbReference type="BioGRID-ORCS" id="10815">
    <property type="hits" value="7 hits in 1142 CRISPR screens"/>
</dbReference>
<dbReference type="EvolutionaryTrace" id="O14810"/>
<dbReference type="GeneWiki" id="CPLX1"/>
<dbReference type="GenomeRNAi" id="10815"/>
<dbReference type="Pharos" id="O14810">
    <property type="development level" value="Tbio"/>
</dbReference>
<dbReference type="PRO" id="PR:O14810"/>
<dbReference type="Proteomes" id="UP000005640">
    <property type="component" value="Chromosome 4"/>
</dbReference>
<dbReference type="RNAct" id="O14810">
    <property type="molecule type" value="protein"/>
</dbReference>
<dbReference type="Bgee" id="ENSG00000168993">
    <property type="expression patterns" value="Expressed in lateral nuclear group of thalamus and 124 other cell types or tissues"/>
</dbReference>
<dbReference type="ExpressionAtlas" id="O14810">
    <property type="expression patterns" value="baseline and differential"/>
</dbReference>
<dbReference type="GO" id="GO:0044305">
    <property type="term" value="C:calyx of Held"/>
    <property type="evidence" value="ECO:0007669"/>
    <property type="project" value="Ensembl"/>
</dbReference>
<dbReference type="GO" id="GO:0005829">
    <property type="term" value="C:cytosol"/>
    <property type="evidence" value="ECO:0000304"/>
    <property type="project" value="Reactome"/>
</dbReference>
<dbReference type="GO" id="GO:0030425">
    <property type="term" value="C:dendrite"/>
    <property type="evidence" value="ECO:0007669"/>
    <property type="project" value="Ensembl"/>
</dbReference>
<dbReference type="GO" id="GO:0098978">
    <property type="term" value="C:glutamatergic synapse"/>
    <property type="evidence" value="ECO:0007669"/>
    <property type="project" value="Ensembl"/>
</dbReference>
<dbReference type="GO" id="GO:0043204">
    <property type="term" value="C:perikaryon"/>
    <property type="evidence" value="ECO:0007669"/>
    <property type="project" value="UniProtKB-SubCell"/>
</dbReference>
<dbReference type="GO" id="GO:0098794">
    <property type="term" value="C:postsynapse"/>
    <property type="evidence" value="ECO:0007669"/>
    <property type="project" value="Ensembl"/>
</dbReference>
<dbReference type="GO" id="GO:0098685">
    <property type="term" value="C:Schaffer collateral - CA1 synapse"/>
    <property type="evidence" value="ECO:0007669"/>
    <property type="project" value="Ensembl"/>
</dbReference>
<dbReference type="GO" id="GO:0031201">
    <property type="term" value="C:SNARE complex"/>
    <property type="evidence" value="ECO:0000318"/>
    <property type="project" value="GO_Central"/>
</dbReference>
<dbReference type="GO" id="GO:0070032">
    <property type="term" value="C:synaptobrevin 2-SNAP-25-syntaxin-1a-complexin I complex"/>
    <property type="evidence" value="ECO:0007669"/>
    <property type="project" value="Ensembl"/>
</dbReference>
<dbReference type="GO" id="GO:0070554">
    <property type="term" value="C:synaptobrevin 2-SNAP-25-syntaxin-3-complexin complex"/>
    <property type="evidence" value="ECO:0000304"/>
    <property type="project" value="ParkinsonsUK-UCL"/>
</dbReference>
<dbReference type="GO" id="GO:0043195">
    <property type="term" value="C:terminal bouton"/>
    <property type="evidence" value="ECO:0000318"/>
    <property type="project" value="GO_Central"/>
</dbReference>
<dbReference type="GO" id="GO:0000149">
    <property type="term" value="F:SNARE binding"/>
    <property type="evidence" value="ECO:0000318"/>
    <property type="project" value="GO_Central"/>
</dbReference>
<dbReference type="GO" id="GO:0017075">
    <property type="term" value="F:syntaxin-1 binding"/>
    <property type="evidence" value="ECO:0007669"/>
    <property type="project" value="Ensembl"/>
</dbReference>
<dbReference type="GO" id="GO:0007268">
    <property type="term" value="P:chemical synaptic transmission"/>
    <property type="evidence" value="ECO:0000304"/>
    <property type="project" value="ProtInc"/>
</dbReference>
<dbReference type="GO" id="GO:0006887">
    <property type="term" value="P:exocytosis"/>
    <property type="evidence" value="ECO:0000304"/>
    <property type="project" value="ProtInc"/>
</dbReference>
<dbReference type="GO" id="GO:0030073">
    <property type="term" value="P:insulin secretion"/>
    <property type="evidence" value="ECO:0007669"/>
    <property type="project" value="Ensembl"/>
</dbReference>
<dbReference type="GO" id="GO:0050804">
    <property type="term" value="P:modulation of chemical synaptic transmission"/>
    <property type="evidence" value="ECO:0000318"/>
    <property type="project" value="GO_Central"/>
</dbReference>
<dbReference type="GO" id="GO:0099145">
    <property type="term" value="P:regulation of exocytic insertion of neurotransmitter receptor to postsynaptic membrane"/>
    <property type="evidence" value="ECO:0007669"/>
    <property type="project" value="Ensembl"/>
</dbReference>
<dbReference type="GO" id="GO:0017157">
    <property type="term" value="P:regulation of exocytosis"/>
    <property type="evidence" value="ECO:0000304"/>
    <property type="project" value="ParkinsonsUK-UCL"/>
</dbReference>
<dbReference type="GO" id="GO:0031630">
    <property type="term" value="P:regulation of synaptic vesicle fusion to presynaptic active zone membrane"/>
    <property type="evidence" value="ECO:0000318"/>
    <property type="project" value="GO_Central"/>
</dbReference>
<dbReference type="GO" id="GO:0016079">
    <property type="term" value="P:synaptic vesicle exocytosis"/>
    <property type="evidence" value="ECO:0000318"/>
    <property type="project" value="GO_Central"/>
</dbReference>
<dbReference type="CDD" id="cd22740">
    <property type="entry name" value="Complexin_NTD"/>
    <property type="match status" value="1"/>
</dbReference>
<dbReference type="DisProt" id="DP02360"/>
<dbReference type="FunFam" id="1.20.5.580:FF:000001">
    <property type="entry name" value="Complexin 2"/>
    <property type="match status" value="1"/>
</dbReference>
<dbReference type="Gene3D" id="1.20.5.580">
    <property type="entry name" value="Single Helix bin"/>
    <property type="match status" value="1"/>
</dbReference>
<dbReference type="InterPro" id="IPR008849">
    <property type="entry name" value="Synaphin"/>
</dbReference>
<dbReference type="PANTHER" id="PTHR16705">
    <property type="entry name" value="COMPLEXIN"/>
    <property type="match status" value="1"/>
</dbReference>
<dbReference type="PANTHER" id="PTHR16705:SF6">
    <property type="entry name" value="COMPLEXIN-1"/>
    <property type="match status" value="1"/>
</dbReference>
<dbReference type="Pfam" id="PF05835">
    <property type="entry name" value="Synaphin"/>
    <property type="match status" value="1"/>
</dbReference>
<dbReference type="SUPFAM" id="SSF58038">
    <property type="entry name" value="SNARE fusion complex"/>
    <property type="match status" value="1"/>
</dbReference>
<gene>
    <name type="primary">CPLX1</name>
</gene>
<organism>
    <name type="scientific">Homo sapiens</name>
    <name type="common">Human</name>
    <dbReference type="NCBI Taxonomy" id="9606"/>
    <lineage>
        <taxon>Eukaryota</taxon>
        <taxon>Metazoa</taxon>
        <taxon>Chordata</taxon>
        <taxon>Craniata</taxon>
        <taxon>Vertebrata</taxon>
        <taxon>Euteleostomi</taxon>
        <taxon>Mammalia</taxon>
        <taxon>Eutheria</taxon>
        <taxon>Euarchontoglires</taxon>
        <taxon>Primates</taxon>
        <taxon>Haplorrhini</taxon>
        <taxon>Catarrhini</taxon>
        <taxon>Hominidae</taxon>
        <taxon>Homo</taxon>
    </lineage>
</organism>
<proteinExistence type="evidence at protein level"/>
<comment type="function">
    <text evidence="2 7">Positively regulates a late step in exocytosis of various cytoplasmic vesicles, such as synaptic vesicles and other secretory vesicles (PubMed:21785414). Organizes the SNAREs into a cross-linked zigzag topology that, when interposed between the vesicle and plasma membranes, is incompatible with fusion, thereby preventing SNAREs from releasing neurotransmitters until an action potential arrives at the synapse (PubMed:21785414). Also involved in glucose-induced secretion of insulin by pancreatic beta-cells. Essential for motor behavior.</text>
</comment>
<comment type="subunit">
    <text evidence="7">Binds to the SNARE core complex containing SNAP25, VAMP2 and STX1A.</text>
</comment>
<comment type="interaction">
    <interactant intactId="EBI-2691813">
        <id>O14810</id>
    </interactant>
    <interactant intactId="EBI-12177361">
        <id>P60880-2</id>
        <label>SNAP25</label>
    </interactant>
    <organismsDiffer>false</organismsDiffer>
    <experiments>6</experiments>
</comment>
<comment type="subcellular location">
    <subcellularLocation>
        <location evidence="2">Cytoplasm</location>
        <location evidence="2">Cytosol</location>
    </subcellularLocation>
    <subcellularLocation>
        <location evidence="2">Perikaryon</location>
    </subcellularLocation>
    <subcellularLocation>
        <location evidence="2">Presynapse</location>
    </subcellularLocation>
    <text evidence="2">Enriched at synaptic-releasing sites in mature neurons.</text>
</comment>
<comment type="tissue specificity">
    <text evidence="5 6 10">Nervous system. In hippocampus and cerebellum, expressed mainly by inhibitory neurons. Overexpressed in substantia nigra from patients with Parkinson disease.</text>
</comment>
<comment type="disease" evidence="8 9">
    <disease id="DI-05248">
        <name>Developmental and epileptic encephalopathy 63</name>
        <acronym>DEE63</acronym>
        <description>A form of epileptic encephalopathy, a heterogeneous group of severe early-onset epilepsies characterized by refractory seizures, neurodevelopmental impairment, and poor prognosis. Development is normal prior to seizure onset, after which cognitive and motor delays become apparent. DEE63 is an autosomal recessive disease with onset in infancy.</description>
        <dbReference type="MIM" id="617976"/>
    </disease>
    <text>The disease is caused by variants affecting the gene represented in this entry.</text>
</comment>
<comment type="similarity">
    <text evidence="11">Belongs to the complexin/synaphin family.</text>
</comment>
<keyword id="KW-0002">3D-structure</keyword>
<keyword id="KW-0966">Cell projection</keyword>
<keyword id="KW-0175">Coiled coil</keyword>
<keyword id="KW-0963">Cytoplasm</keyword>
<keyword id="KW-0225">Disease variant</keyword>
<keyword id="KW-0887">Epilepsy</keyword>
<keyword id="KW-0268">Exocytosis</keyword>
<keyword id="KW-0532">Neurotransmitter transport</keyword>
<keyword id="KW-1267">Proteomics identification</keyword>
<keyword id="KW-1185">Reference proteome</keyword>
<keyword id="KW-0770">Synapse</keyword>
<keyword id="KW-0813">Transport</keyword>
<name>CPLX1_HUMAN</name>
<sequence>MEFVMKQALGGATKDMGKMLGGDEEKDPDAAKKEEERQEALRQAEEERKAKYAKMEAEREAVRQGIRDKYGIKKKEEREAEAQAAMEANSEGSLTRPKKAIPPGCGDEVEEEDESILDTVIKYLPGPLQDMLKK</sequence>